<dbReference type="EC" id="3.4.24.-" evidence="1"/>
<dbReference type="EMBL" id="AL596167">
    <property type="protein sequence ID" value="CAC96193.1"/>
    <property type="molecule type" value="Genomic_DNA"/>
</dbReference>
<dbReference type="PIR" id="AI1552">
    <property type="entry name" value="AI1552"/>
</dbReference>
<dbReference type="RefSeq" id="WP_003761442.1">
    <property type="nucleotide sequence ID" value="NC_003212.1"/>
</dbReference>
<dbReference type="STRING" id="272626.gene:17565292"/>
<dbReference type="GeneID" id="93234409"/>
<dbReference type="KEGG" id="lin:lin0962"/>
<dbReference type="eggNOG" id="COG0501">
    <property type="taxonomic scope" value="Bacteria"/>
</dbReference>
<dbReference type="HOGENOM" id="CLU_042266_2_1_9"/>
<dbReference type="OrthoDB" id="15218at2"/>
<dbReference type="Proteomes" id="UP000002513">
    <property type="component" value="Chromosome"/>
</dbReference>
<dbReference type="GO" id="GO:0005886">
    <property type="term" value="C:plasma membrane"/>
    <property type="evidence" value="ECO:0007669"/>
    <property type="project" value="UniProtKB-SubCell"/>
</dbReference>
<dbReference type="GO" id="GO:0004222">
    <property type="term" value="F:metalloendopeptidase activity"/>
    <property type="evidence" value="ECO:0007669"/>
    <property type="project" value="UniProtKB-UniRule"/>
</dbReference>
<dbReference type="GO" id="GO:0008270">
    <property type="term" value="F:zinc ion binding"/>
    <property type="evidence" value="ECO:0007669"/>
    <property type="project" value="UniProtKB-UniRule"/>
</dbReference>
<dbReference type="GO" id="GO:0006508">
    <property type="term" value="P:proteolysis"/>
    <property type="evidence" value="ECO:0007669"/>
    <property type="project" value="UniProtKB-KW"/>
</dbReference>
<dbReference type="CDD" id="cd07340">
    <property type="entry name" value="M48B_Htpx_like"/>
    <property type="match status" value="1"/>
</dbReference>
<dbReference type="Gene3D" id="3.30.2010.10">
    <property type="entry name" value="Metalloproteases ('zincins'), catalytic domain"/>
    <property type="match status" value="1"/>
</dbReference>
<dbReference type="HAMAP" id="MF_00188">
    <property type="entry name" value="Pept_M48_protease_HtpX"/>
    <property type="match status" value="1"/>
</dbReference>
<dbReference type="InterPro" id="IPR050083">
    <property type="entry name" value="HtpX_protease"/>
</dbReference>
<dbReference type="InterPro" id="IPR022919">
    <property type="entry name" value="Pept_M48_protease_HtpX"/>
</dbReference>
<dbReference type="InterPro" id="IPR001915">
    <property type="entry name" value="Peptidase_M48"/>
</dbReference>
<dbReference type="NCBIfam" id="NF003425">
    <property type="entry name" value="PRK04897.1"/>
    <property type="match status" value="1"/>
</dbReference>
<dbReference type="PANTHER" id="PTHR43221">
    <property type="entry name" value="PROTEASE HTPX"/>
    <property type="match status" value="1"/>
</dbReference>
<dbReference type="PANTHER" id="PTHR43221:SF1">
    <property type="entry name" value="PROTEASE HTPX"/>
    <property type="match status" value="1"/>
</dbReference>
<dbReference type="Pfam" id="PF01435">
    <property type="entry name" value="Peptidase_M48"/>
    <property type="match status" value="1"/>
</dbReference>
<proteinExistence type="inferred from homology"/>
<reference key="1">
    <citation type="journal article" date="2001" name="Science">
        <title>Comparative genomics of Listeria species.</title>
        <authorList>
            <person name="Glaser P."/>
            <person name="Frangeul L."/>
            <person name="Buchrieser C."/>
            <person name="Rusniok C."/>
            <person name="Amend A."/>
            <person name="Baquero F."/>
            <person name="Berche P."/>
            <person name="Bloecker H."/>
            <person name="Brandt P."/>
            <person name="Chakraborty T."/>
            <person name="Charbit A."/>
            <person name="Chetouani F."/>
            <person name="Couve E."/>
            <person name="de Daruvar A."/>
            <person name="Dehoux P."/>
            <person name="Domann E."/>
            <person name="Dominguez-Bernal G."/>
            <person name="Duchaud E."/>
            <person name="Durant L."/>
            <person name="Dussurget O."/>
            <person name="Entian K.-D."/>
            <person name="Fsihi H."/>
            <person name="Garcia-del Portillo F."/>
            <person name="Garrido P."/>
            <person name="Gautier L."/>
            <person name="Goebel W."/>
            <person name="Gomez-Lopez N."/>
            <person name="Hain T."/>
            <person name="Hauf J."/>
            <person name="Jackson D."/>
            <person name="Jones L.-M."/>
            <person name="Kaerst U."/>
            <person name="Kreft J."/>
            <person name="Kuhn M."/>
            <person name="Kunst F."/>
            <person name="Kurapkat G."/>
            <person name="Madueno E."/>
            <person name="Maitournam A."/>
            <person name="Mata Vicente J."/>
            <person name="Ng E."/>
            <person name="Nedjari H."/>
            <person name="Nordsiek G."/>
            <person name="Novella S."/>
            <person name="de Pablos B."/>
            <person name="Perez-Diaz J.-C."/>
            <person name="Purcell R."/>
            <person name="Remmel B."/>
            <person name="Rose M."/>
            <person name="Schlueter T."/>
            <person name="Simoes N."/>
            <person name="Tierrez A."/>
            <person name="Vazquez-Boland J.-A."/>
            <person name="Voss H."/>
            <person name="Wehland J."/>
            <person name="Cossart P."/>
        </authorList>
    </citation>
    <scope>NUCLEOTIDE SEQUENCE [LARGE SCALE GENOMIC DNA]</scope>
    <source>
        <strain>ATCC BAA-680 / CLIP 11262</strain>
    </source>
</reference>
<feature type="chain" id="PRO_0000138871" description="Protease HtpX homolog">
    <location>
        <begin position="1"/>
        <end position="304"/>
    </location>
</feature>
<feature type="transmembrane region" description="Helical" evidence="1">
    <location>
        <begin position="14"/>
        <end position="34"/>
    </location>
</feature>
<feature type="transmembrane region" description="Helical" evidence="1">
    <location>
        <begin position="39"/>
        <end position="59"/>
    </location>
</feature>
<feature type="transmembrane region" description="Helical" evidence="1">
    <location>
        <begin position="159"/>
        <end position="179"/>
    </location>
</feature>
<feature type="transmembrane region" description="Helical" evidence="1">
    <location>
        <begin position="202"/>
        <end position="222"/>
    </location>
</feature>
<feature type="region of interest" description="Disordered" evidence="2">
    <location>
        <begin position="275"/>
        <end position="304"/>
    </location>
</feature>
<feature type="active site" evidence="1">
    <location>
        <position position="145"/>
    </location>
</feature>
<feature type="binding site" evidence="1">
    <location>
        <position position="144"/>
    </location>
    <ligand>
        <name>Zn(2+)</name>
        <dbReference type="ChEBI" id="CHEBI:29105"/>
        <note>catalytic</note>
    </ligand>
</feature>
<feature type="binding site" evidence="1">
    <location>
        <position position="148"/>
    </location>
    <ligand>
        <name>Zn(2+)</name>
        <dbReference type="ChEBI" id="CHEBI:29105"/>
        <note>catalytic</note>
    </ligand>
</feature>
<feature type="binding site" evidence="1">
    <location>
        <position position="231"/>
    </location>
    <ligand>
        <name>Zn(2+)</name>
        <dbReference type="ChEBI" id="CHEBI:29105"/>
        <note>catalytic</note>
    </ligand>
</feature>
<keyword id="KW-1003">Cell membrane</keyword>
<keyword id="KW-0378">Hydrolase</keyword>
<keyword id="KW-0472">Membrane</keyword>
<keyword id="KW-0479">Metal-binding</keyword>
<keyword id="KW-0482">Metalloprotease</keyword>
<keyword id="KW-0645">Protease</keyword>
<keyword id="KW-0812">Transmembrane</keyword>
<keyword id="KW-1133">Transmembrane helix</keyword>
<keyword id="KW-0862">Zinc</keyword>
<sequence>MLFEQIAANKRKTVFIILGFFIFVLMVGAAIGIIVWNNYLNGLILAAAIGAVYILIMVMSSSSVVMAMNHAKEVTSKEQAPVLWDTVESMAMVAGIPMPKVYIVEDPSPNAFATGISPEKGAVAVTRGLLNKLERYELEGVIAHEISHIRNYDIRLSTIAIALVAVIAILSDLAMRLIFWGSLTGGRNSRKSDNNNGGGAQIIIYVVALIFVILAPIIATAIQFALSRNREYLADASAVELTRNPDGLIQALQKISGDTKKMEEVSASSESIYFSSPLKSKKDKPGLFDSHPPISSRIERLENM</sequence>
<organism>
    <name type="scientific">Listeria innocua serovar 6a (strain ATCC BAA-680 / CLIP 11262)</name>
    <dbReference type="NCBI Taxonomy" id="272626"/>
    <lineage>
        <taxon>Bacteria</taxon>
        <taxon>Bacillati</taxon>
        <taxon>Bacillota</taxon>
        <taxon>Bacilli</taxon>
        <taxon>Bacillales</taxon>
        <taxon>Listeriaceae</taxon>
        <taxon>Listeria</taxon>
    </lineage>
</organism>
<protein>
    <recommendedName>
        <fullName evidence="1">Protease HtpX homolog</fullName>
        <ecNumber evidence="1">3.4.24.-</ecNumber>
    </recommendedName>
</protein>
<evidence type="ECO:0000255" key="1">
    <source>
        <dbReference type="HAMAP-Rule" id="MF_00188"/>
    </source>
</evidence>
<evidence type="ECO:0000256" key="2">
    <source>
        <dbReference type="SAM" id="MobiDB-lite"/>
    </source>
</evidence>
<gene>
    <name evidence="1" type="primary">htpX</name>
    <name type="ordered locus">lin0962</name>
</gene>
<comment type="cofactor">
    <cofactor evidence="1">
        <name>Zn(2+)</name>
        <dbReference type="ChEBI" id="CHEBI:29105"/>
    </cofactor>
    <text evidence="1">Binds 1 zinc ion per subunit.</text>
</comment>
<comment type="subcellular location">
    <subcellularLocation>
        <location evidence="1">Cell membrane</location>
        <topology evidence="1">Multi-pass membrane protein</topology>
    </subcellularLocation>
</comment>
<comment type="similarity">
    <text evidence="1">Belongs to the peptidase M48B family.</text>
</comment>
<accession>Q92D58</accession>
<name>HTPX_LISIN</name>